<comment type="subunit">
    <text evidence="4">Component of the U11/U12 snRNPs that are part of the U12-type spliceosome.</text>
</comment>
<comment type="interaction">
    <interactant intactId="EBI-11124401">
        <id>Q8TBF4</id>
    </interactant>
    <interactant intactId="EBI-352682">
        <id>P04792</id>
        <label>HSPB1</label>
    </interactant>
    <organismsDiffer>false</organismsDiffer>
    <experiments>3</experiments>
</comment>
<comment type="interaction">
    <interactant intactId="EBI-11124401">
        <id>Q8TBF4</id>
    </interactant>
    <interactant intactId="EBI-988601">
        <id>O43933</id>
        <label>PEX1</label>
    </interactant>
    <organismsDiffer>false</organismsDiffer>
    <experiments>3</experiments>
</comment>
<comment type="interaction">
    <interactant intactId="EBI-11124401">
        <id>Q8TBF4</id>
    </interactant>
    <interactant intactId="EBI-720609">
        <id>O76024</id>
        <label>WFS1</label>
    </interactant>
    <organismsDiffer>false</organismsDiffer>
    <experiments>3</experiments>
</comment>
<comment type="subcellular location">
    <subcellularLocation>
        <location evidence="4 6">Nucleus</location>
        <location evidence="4 6">Nucleoplasm</location>
    </subcellularLocation>
</comment>
<comment type="induction">
    <text evidence="6">Up-regulated by morphine. Down-regulated at 30-36 degrees Celsius while it is up-regulated at 39 degrees Celsius.</text>
</comment>
<keyword id="KW-0002">3D-structure</keyword>
<keyword id="KW-0479">Metal-binding</keyword>
<keyword id="KW-0507">mRNA processing</keyword>
<keyword id="KW-0508">mRNA splicing</keyword>
<keyword id="KW-0539">Nucleus</keyword>
<keyword id="KW-0597">Phosphoprotein</keyword>
<keyword id="KW-1267">Proteomics identification</keyword>
<keyword id="KW-1185">Reference proteome</keyword>
<keyword id="KW-0694">RNA-binding</keyword>
<keyword id="KW-0747">Spliceosome</keyword>
<keyword id="KW-0862">Zinc</keyword>
<keyword id="KW-0863">Zinc-finger</keyword>
<sequence>MSGGLAPSKSTVYVSNLPFSLTNNDLYRIFSKYGKVVKVTIMKDKDTRKSKGVAFILFLDKDSAQNCTRAINNKQLFGRVIKASIAIDNGRAAEFIRRRNYFDKSKCYECGESGHLSYACPKNMLGEREPPKKKEKKKKKKAPEPEEEIEEVEESEDEGEDPALDSLSQAIAFQQAKIEEEQKKWKPSSGVPSTSDDSRRPRIKKSTYFSDEEELSD</sequence>
<name>ZCRB1_HUMAN</name>
<evidence type="ECO:0000255" key="1">
    <source>
        <dbReference type="PROSITE-ProRule" id="PRU00047"/>
    </source>
</evidence>
<evidence type="ECO:0000255" key="2">
    <source>
        <dbReference type="PROSITE-ProRule" id="PRU00176"/>
    </source>
</evidence>
<evidence type="ECO:0000256" key="3">
    <source>
        <dbReference type="SAM" id="MobiDB-lite"/>
    </source>
</evidence>
<evidence type="ECO:0000269" key="4">
    <source>
    </source>
</evidence>
<evidence type="ECO:0000269" key="5">
    <source>
    </source>
</evidence>
<evidence type="ECO:0000269" key="6">
    <source>
    </source>
</evidence>
<evidence type="ECO:0007744" key="7">
    <source>
    </source>
</evidence>
<evidence type="ECO:0007744" key="8">
    <source>
    </source>
</evidence>
<evidence type="ECO:0007744" key="9">
    <source>
    </source>
</evidence>
<evidence type="ECO:0007744" key="10">
    <source>
    </source>
</evidence>
<evidence type="ECO:0007744" key="11">
    <source>
    </source>
</evidence>
<evidence type="ECO:0007744" key="12">
    <source>
    </source>
</evidence>
<evidence type="ECO:0007829" key="13">
    <source>
        <dbReference type="PDB" id="2E5H"/>
    </source>
</evidence>
<organism>
    <name type="scientific">Homo sapiens</name>
    <name type="common">Human</name>
    <dbReference type="NCBI Taxonomy" id="9606"/>
    <lineage>
        <taxon>Eukaryota</taxon>
        <taxon>Metazoa</taxon>
        <taxon>Chordata</taxon>
        <taxon>Craniata</taxon>
        <taxon>Vertebrata</taxon>
        <taxon>Euteleostomi</taxon>
        <taxon>Mammalia</taxon>
        <taxon>Eutheria</taxon>
        <taxon>Euarchontoglires</taxon>
        <taxon>Primates</taxon>
        <taxon>Haplorrhini</taxon>
        <taxon>Catarrhini</taxon>
        <taxon>Hominidae</taxon>
        <taxon>Homo</taxon>
    </lineage>
</organism>
<accession>Q8TBF4</accession>
<accession>Q6PJX0</accession>
<accession>Q96TA6</accession>
<protein>
    <recommendedName>
        <fullName>Zinc finger CCHC-type and RNA-binding motif-containing protein 1</fullName>
    </recommendedName>
    <alternativeName>
        <fullName>U11/U12 small nuclear ribonucleoprotein 31 kDa protein</fullName>
        <shortName>U11/U12 snRNP 31 kDa protein</shortName>
        <shortName>U11/U12-31K</shortName>
    </alternativeName>
</protein>
<gene>
    <name type="primary">ZCRB1</name>
</gene>
<feature type="chain" id="PRO_0000252373" description="Zinc finger CCHC-type and RNA-binding motif-containing protein 1">
    <location>
        <begin position="1"/>
        <end position="217"/>
    </location>
</feature>
<feature type="domain" description="RRM" evidence="2">
    <location>
        <begin position="10"/>
        <end position="88"/>
    </location>
</feature>
<feature type="zinc finger region" description="CCHC-type" evidence="1">
    <location>
        <begin position="105"/>
        <end position="122"/>
    </location>
</feature>
<feature type="region of interest" description="Disordered" evidence="3">
    <location>
        <begin position="120"/>
        <end position="217"/>
    </location>
</feature>
<feature type="compositionally biased region" description="Acidic residues" evidence="3">
    <location>
        <begin position="145"/>
        <end position="163"/>
    </location>
</feature>
<feature type="modified residue" description="Phosphoserine" evidence="7 8 9 10 11 12">
    <location>
        <position position="155"/>
    </location>
</feature>
<feature type="modified residue" description="Phosphoserine" evidence="9">
    <location>
        <position position="210"/>
    </location>
</feature>
<feature type="modified residue" description="Phosphoserine" evidence="9">
    <location>
        <position position="216"/>
    </location>
</feature>
<feature type="sequence variant" id="VAR_027845" description="In dbSNP:rs17852093." evidence="5">
    <original>P</original>
    <variation>Q</variation>
    <location>
        <position position="131"/>
    </location>
</feature>
<feature type="strand" evidence="13">
    <location>
        <begin position="11"/>
        <end position="16"/>
    </location>
</feature>
<feature type="helix" evidence="13">
    <location>
        <begin position="23"/>
        <end position="29"/>
    </location>
</feature>
<feature type="turn" evidence="13">
    <location>
        <begin position="30"/>
        <end position="33"/>
    </location>
</feature>
<feature type="strand" evidence="13">
    <location>
        <begin position="36"/>
        <end position="41"/>
    </location>
</feature>
<feature type="strand" evidence="13">
    <location>
        <begin position="45"/>
        <end position="47"/>
    </location>
</feature>
<feature type="strand" evidence="13">
    <location>
        <begin position="54"/>
        <end position="59"/>
    </location>
</feature>
<feature type="helix" evidence="13">
    <location>
        <begin position="61"/>
        <end position="70"/>
    </location>
</feature>
<feature type="turn" evidence="13">
    <location>
        <begin position="71"/>
        <end position="73"/>
    </location>
</feature>
<feature type="strand" evidence="13">
    <location>
        <begin position="74"/>
        <end position="76"/>
    </location>
</feature>
<feature type="strand" evidence="13">
    <location>
        <begin position="79"/>
        <end position="85"/>
    </location>
</feature>
<dbReference type="EMBL" id="AB062361">
    <property type="protein sequence ID" value="BAB56132.1"/>
    <property type="molecule type" value="mRNA"/>
</dbReference>
<dbReference type="EMBL" id="CH471111">
    <property type="protein sequence ID" value="EAW57842.1"/>
    <property type="molecule type" value="Genomic_DNA"/>
</dbReference>
<dbReference type="EMBL" id="BC010177">
    <property type="protein sequence ID" value="AAH10177.1"/>
    <property type="molecule type" value="mRNA"/>
</dbReference>
<dbReference type="EMBL" id="BC022543">
    <property type="protein sequence ID" value="AAH22543.1"/>
    <property type="molecule type" value="mRNA"/>
</dbReference>
<dbReference type="EMBL" id="BK005200">
    <property type="protein sequence ID" value="DAA05498.1"/>
    <property type="molecule type" value="mRNA"/>
</dbReference>
<dbReference type="CCDS" id="CCDS8740.1"/>
<dbReference type="RefSeq" id="NP_149105.3">
    <property type="nucleotide sequence ID" value="NM_033114.3"/>
</dbReference>
<dbReference type="PDB" id="2E5H">
    <property type="method" value="NMR"/>
    <property type="chains" value="A=1-87"/>
</dbReference>
<dbReference type="PDBsum" id="2E5H"/>
<dbReference type="SMR" id="Q8TBF4"/>
<dbReference type="BioGRID" id="124524">
    <property type="interactions" value="142"/>
</dbReference>
<dbReference type="CORUM" id="Q8TBF4"/>
<dbReference type="FunCoup" id="Q8TBF4">
    <property type="interactions" value="2891"/>
</dbReference>
<dbReference type="IntAct" id="Q8TBF4">
    <property type="interactions" value="117"/>
</dbReference>
<dbReference type="MINT" id="Q8TBF4"/>
<dbReference type="STRING" id="9606.ENSP00000266529"/>
<dbReference type="iPTMnet" id="Q8TBF4"/>
<dbReference type="PhosphoSitePlus" id="Q8TBF4"/>
<dbReference type="BioMuta" id="ZCRB1"/>
<dbReference type="DMDM" id="158931154"/>
<dbReference type="jPOST" id="Q8TBF4"/>
<dbReference type="MassIVE" id="Q8TBF4"/>
<dbReference type="PaxDb" id="9606-ENSP00000266529"/>
<dbReference type="PeptideAtlas" id="Q8TBF4"/>
<dbReference type="ProteomicsDB" id="74010"/>
<dbReference type="Pumba" id="Q8TBF4"/>
<dbReference type="Antibodypedia" id="25048">
    <property type="antibodies" value="122 antibodies from 25 providers"/>
</dbReference>
<dbReference type="DNASU" id="85437"/>
<dbReference type="Ensembl" id="ENST00000266529.8">
    <property type="protein sequence ID" value="ENSP00000266529.3"/>
    <property type="gene ID" value="ENSG00000139168.9"/>
</dbReference>
<dbReference type="Ensembl" id="ENST00000677694.1">
    <property type="protein sequence ID" value="ENSP00000503171.1"/>
    <property type="gene ID" value="ENSG00000139168.9"/>
</dbReference>
<dbReference type="Ensembl" id="ENST00000679269.1">
    <property type="protein sequence ID" value="ENSP00000503413.1"/>
    <property type="gene ID" value="ENSG00000139168.9"/>
</dbReference>
<dbReference type="GeneID" id="85437"/>
<dbReference type="KEGG" id="hsa:85437"/>
<dbReference type="MANE-Select" id="ENST00000266529.8">
    <property type="protein sequence ID" value="ENSP00000266529.3"/>
    <property type="RefSeq nucleotide sequence ID" value="NM_033114.4"/>
    <property type="RefSeq protein sequence ID" value="NP_149105.3"/>
</dbReference>
<dbReference type="UCSC" id="uc001rmz.4">
    <property type="organism name" value="human"/>
</dbReference>
<dbReference type="AGR" id="HGNC:29620"/>
<dbReference type="CTD" id="85437"/>
<dbReference type="DisGeNET" id="85437"/>
<dbReference type="GeneCards" id="ZCRB1"/>
<dbReference type="HGNC" id="HGNC:29620">
    <property type="gene designation" value="ZCRB1"/>
</dbReference>
<dbReference type="HPA" id="ENSG00000139168">
    <property type="expression patterns" value="Low tissue specificity"/>
</dbReference>
<dbReference type="MIM" id="610750">
    <property type="type" value="gene"/>
</dbReference>
<dbReference type="neXtProt" id="NX_Q8TBF4"/>
<dbReference type="OpenTargets" id="ENSG00000139168"/>
<dbReference type="PharmGKB" id="PA143485674"/>
<dbReference type="VEuPathDB" id="HostDB:ENSG00000139168"/>
<dbReference type="eggNOG" id="KOG0118">
    <property type="taxonomic scope" value="Eukaryota"/>
</dbReference>
<dbReference type="GeneTree" id="ENSGT00730000111061"/>
<dbReference type="HOGENOM" id="CLU_059455_1_0_1"/>
<dbReference type="InParanoid" id="Q8TBF4"/>
<dbReference type="OMA" id="AHYFNDE"/>
<dbReference type="OrthoDB" id="267048at2759"/>
<dbReference type="PAN-GO" id="Q8TBF4">
    <property type="GO annotations" value="2 GO annotations based on evolutionary models"/>
</dbReference>
<dbReference type="PhylomeDB" id="Q8TBF4"/>
<dbReference type="TreeFam" id="TF106263"/>
<dbReference type="PathwayCommons" id="Q8TBF4"/>
<dbReference type="Reactome" id="R-HSA-72165">
    <property type="pathway name" value="mRNA Splicing - Minor Pathway"/>
</dbReference>
<dbReference type="Reactome" id="R-HSA-9682706">
    <property type="pathway name" value="Replication of the SARS-CoV-1 genome"/>
</dbReference>
<dbReference type="Reactome" id="R-HSA-9694686">
    <property type="pathway name" value="Replication of the SARS-CoV-2 genome"/>
</dbReference>
<dbReference type="SignaLink" id="Q8TBF4"/>
<dbReference type="BioGRID-ORCS" id="85437">
    <property type="hits" value="470 hits in 1128 CRISPR screens"/>
</dbReference>
<dbReference type="CD-CODE" id="91857CE7">
    <property type="entry name" value="Nucleolus"/>
</dbReference>
<dbReference type="ChiTaRS" id="ZCRB1">
    <property type="organism name" value="human"/>
</dbReference>
<dbReference type="EvolutionaryTrace" id="Q8TBF4"/>
<dbReference type="GenomeRNAi" id="85437"/>
<dbReference type="Pharos" id="Q8TBF4">
    <property type="development level" value="Tbio"/>
</dbReference>
<dbReference type="PRO" id="PR:Q8TBF4"/>
<dbReference type="Proteomes" id="UP000005640">
    <property type="component" value="Chromosome 12"/>
</dbReference>
<dbReference type="RNAct" id="Q8TBF4">
    <property type="molecule type" value="protein"/>
</dbReference>
<dbReference type="Bgee" id="ENSG00000139168">
    <property type="expression patterns" value="Expressed in medial globus pallidus and 196 other cell types or tissues"/>
</dbReference>
<dbReference type="ExpressionAtlas" id="Q8TBF4">
    <property type="expression patterns" value="baseline and differential"/>
</dbReference>
<dbReference type="GO" id="GO:0005829">
    <property type="term" value="C:cytosol"/>
    <property type="evidence" value="ECO:0000304"/>
    <property type="project" value="Reactome"/>
</dbReference>
<dbReference type="GO" id="GO:0005654">
    <property type="term" value="C:nucleoplasm"/>
    <property type="evidence" value="ECO:0000304"/>
    <property type="project" value="Reactome"/>
</dbReference>
<dbReference type="GO" id="GO:0005689">
    <property type="term" value="C:U12-type spliceosomal complex"/>
    <property type="evidence" value="ECO:0000314"/>
    <property type="project" value="HGNC-UCL"/>
</dbReference>
<dbReference type="GO" id="GO:0003723">
    <property type="term" value="F:RNA binding"/>
    <property type="evidence" value="ECO:0007005"/>
    <property type="project" value="UniProtKB"/>
</dbReference>
<dbReference type="GO" id="GO:0008270">
    <property type="term" value="F:zinc ion binding"/>
    <property type="evidence" value="ECO:0007669"/>
    <property type="project" value="UniProtKB-KW"/>
</dbReference>
<dbReference type="GO" id="GO:0000398">
    <property type="term" value="P:mRNA splicing, via spliceosome"/>
    <property type="evidence" value="ECO:0007669"/>
    <property type="project" value="InterPro"/>
</dbReference>
<dbReference type="GO" id="GO:0008380">
    <property type="term" value="P:RNA splicing"/>
    <property type="evidence" value="ECO:0000305"/>
    <property type="project" value="HGNC-UCL"/>
</dbReference>
<dbReference type="CDD" id="cd12393">
    <property type="entry name" value="RRM_ZCRB1"/>
    <property type="match status" value="1"/>
</dbReference>
<dbReference type="FunFam" id="3.30.70.330:FF:000233">
    <property type="entry name" value="Zinc finger CCHC-type and RNA-binding motif-containing protein 1"/>
    <property type="match status" value="1"/>
</dbReference>
<dbReference type="FunFam" id="4.10.60.10:FF:000009">
    <property type="entry name" value="Zinc finger CCHC-type and RNA-binding motif-containing protein 1"/>
    <property type="match status" value="1"/>
</dbReference>
<dbReference type="Gene3D" id="3.30.70.330">
    <property type="match status" value="1"/>
</dbReference>
<dbReference type="Gene3D" id="4.10.60.10">
    <property type="entry name" value="Zinc finger, CCHC-type"/>
    <property type="match status" value="1"/>
</dbReference>
<dbReference type="InterPro" id="IPR012677">
    <property type="entry name" value="Nucleotide-bd_a/b_plait_sf"/>
</dbReference>
<dbReference type="InterPro" id="IPR035979">
    <property type="entry name" value="RBD_domain_sf"/>
</dbReference>
<dbReference type="InterPro" id="IPR000504">
    <property type="entry name" value="RRM_dom"/>
</dbReference>
<dbReference type="InterPro" id="IPR003954">
    <property type="entry name" value="RRM_dom_euk"/>
</dbReference>
<dbReference type="InterPro" id="IPR044598">
    <property type="entry name" value="ZCRB1"/>
</dbReference>
<dbReference type="InterPro" id="IPR034219">
    <property type="entry name" value="ZCRB1_RRM"/>
</dbReference>
<dbReference type="InterPro" id="IPR001878">
    <property type="entry name" value="Znf_CCHC"/>
</dbReference>
<dbReference type="InterPro" id="IPR036875">
    <property type="entry name" value="Znf_CCHC_sf"/>
</dbReference>
<dbReference type="PANTHER" id="PTHR46259">
    <property type="entry name" value="ZINC FINGER CCHC-TYPE AND RNA-BINDING MOTIF-CONTAINING PROTEIN 1"/>
    <property type="match status" value="1"/>
</dbReference>
<dbReference type="PANTHER" id="PTHR46259:SF1">
    <property type="entry name" value="ZINC FINGER CCHC-TYPE AND RNA-BINDING MOTIF-CONTAINING PROTEIN 1"/>
    <property type="match status" value="1"/>
</dbReference>
<dbReference type="Pfam" id="PF00076">
    <property type="entry name" value="RRM_1"/>
    <property type="match status" value="1"/>
</dbReference>
<dbReference type="Pfam" id="PF00098">
    <property type="entry name" value="zf-CCHC"/>
    <property type="match status" value="1"/>
</dbReference>
<dbReference type="SMART" id="SM00360">
    <property type="entry name" value="RRM"/>
    <property type="match status" value="1"/>
</dbReference>
<dbReference type="SMART" id="SM00361">
    <property type="entry name" value="RRM_1"/>
    <property type="match status" value="1"/>
</dbReference>
<dbReference type="SMART" id="SM00343">
    <property type="entry name" value="ZnF_C2HC"/>
    <property type="match status" value="1"/>
</dbReference>
<dbReference type="SUPFAM" id="SSF57756">
    <property type="entry name" value="Retrovirus zinc finger-like domains"/>
    <property type="match status" value="1"/>
</dbReference>
<dbReference type="SUPFAM" id="SSF54928">
    <property type="entry name" value="RNA-binding domain, RBD"/>
    <property type="match status" value="1"/>
</dbReference>
<dbReference type="PROSITE" id="PS50102">
    <property type="entry name" value="RRM"/>
    <property type="match status" value="1"/>
</dbReference>
<dbReference type="PROSITE" id="PS50158">
    <property type="entry name" value="ZF_CCHC"/>
    <property type="match status" value="1"/>
</dbReference>
<proteinExistence type="evidence at protein level"/>
<reference key="1">
    <citation type="journal article" date="2007" name="Genomics">
        <title>Isolation, expression, and characterization of the human ZCRB1 gene mapped to 12q12.</title>
        <authorList>
            <person name="Wang H."/>
            <person name="Gao M.X."/>
            <person name="Li L."/>
            <person name="Wang B."/>
            <person name="Hori N."/>
            <person name="Sato K."/>
        </authorList>
    </citation>
    <scope>NUCLEOTIDE SEQUENCE [MRNA]</scope>
    <scope>SUBCELLULAR LOCATION</scope>
    <scope>INDUCTION</scope>
</reference>
<reference key="2">
    <citation type="submission" date="2005-07" db="EMBL/GenBank/DDBJ databases">
        <authorList>
            <person name="Mural R.J."/>
            <person name="Istrail S."/>
            <person name="Sutton G.G."/>
            <person name="Florea L."/>
            <person name="Halpern A.L."/>
            <person name="Mobarry C.M."/>
            <person name="Lippert R."/>
            <person name="Walenz B."/>
            <person name="Shatkay H."/>
            <person name="Dew I."/>
            <person name="Miller J.R."/>
            <person name="Flanigan M.J."/>
            <person name="Edwards N.J."/>
            <person name="Bolanos R."/>
            <person name="Fasulo D."/>
            <person name="Halldorsson B.V."/>
            <person name="Hannenhalli S."/>
            <person name="Turner R."/>
            <person name="Yooseph S."/>
            <person name="Lu F."/>
            <person name="Nusskern D.R."/>
            <person name="Shue B.C."/>
            <person name="Zheng X.H."/>
            <person name="Zhong F."/>
            <person name="Delcher A.L."/>
            <person name="Huson D.H."/>
            <person name="Kravitz S.A."/>
            <person name="Mouchard L."/>
            <person name="Reinert K."/>
            <person name="Remington K.A."/>
            <person name="Clark A.G."/>
            <person name="Waterman M.S."/>
            <person name="Eichler E.E."/>
            <person name="Adams M.D."/>
            <person name="Hunkapiller M.W."/>
            <person name="Myers E.W."/>
            <person name="Venter J.C."/>
        </authorList>
    </citation>
    <scope>NUCLEOTIDE SEQUENCE [LARGE SCALE GENOMIC DNA]</scope>
</reference>
<reference key="3">
    <citation type="journal article" date="2004" name="Genome Res.">
        <title>The status, quality, and expansion of the NIH full-length cDNA project: the Mammalian Gene Collection (MGC).</title>
        <authorList>
            <consortium name="The MGC Project Team"/>
        </authorList>
    </citation>
    <scope>NUCLEOTIDE SEQUENCE [LARGE SCALE MRNA]</scope>
    <scope>VARIANT GLN-131</scope>
    <source>
        <tissue>Brain</tissue>
        <tissue>Lung</tissue>
    </source>
</reference>
<reference key="4">
    <citation type="journal article" date="2004" name="RNA">
        <title>The human 18S U11/U12 snRNP contains a set of novel proteins not found in the U2-dependent spliceosome.</title>
        <authorList>
            <person name="Will C.L."/>
            <person name="Schneider C."/>
            <person name="Hossbach M."/>
            <person name="Urlaub H."/>
            <person name="Rauhut R."/>
            <person name="Elbashir S."/>
            <person name="Tuschl T."/>
            <person name="Luehrmann R."/>
        </authorList>
    </citation>
    <scope>IDENTIFICATION IN A COMPLEX WITH THE U11/U12 SPLICEOSOME</scope>
    <scope>SUBCELLULAR LOCATION</scope>
    <scope>IDENTIFICATION BY MASS SPECTROMETRY</scope>
</reference>
<reference key="5">
    <citation type="journal article" date="2006" name="Cell">
        <title>Global, in vivo, and site-specific phosphorylation dynamics in signaling networks.</title>
        <authorList>
            <person name="Olsen J.V."/>
            <person name="Blagoev B."/>
            <person name="Gnad F."/>
            <person name="Macek B."/>
            <person name="Kumar C."/>
            <person name="Mortensen P."/>
            <person name="Mann M."/>
        </authorList>
    </citation>
    <scope>PHOSPHORYLATION [LARGE SCALE ANALYSIS] AT SER-155</scope>
    <scope>IDENTIFICATION BY MASS SPECTROMETRY [LARGE SCALE ANALYSIS]</scope>
    <source>
        <tissue>Cervix carcinoma</tissue>
    </source>
</reference>
<reference key="6">
    <citation type="journal article" date="2007" name="Mol. Cell. Proteomics">
        <title>Quantitative phosphoproteome profiling of Wnt3a-mediated signaling network: indicating the involvement of ribonucleoside-diphosphate reductase M2 subunit phosphorylation at residue serine 20 in canonical Wnt signal transduction.</title>
        <authorList>
            <person name="Tang L.-Y."/>
            <person name="Deng N."/>
            <person name="Wang L.-S."/>
            <person name="Dai J."/>
            <person name="Wang Z.-L."/>
            <person name="Jiang X.-S."/>
            <person name="Li S.-J."/>
            <person name="Li L."/>
            <person name="Sheng Q.-H."/>
            <person name="Wu D.-Q."/>
            <person name="Li L."/>
            <person name="Zeng R."/>
        </authorList>
    </citation>
    <scope>PHOSPHORYLATION [LARGE SCALE ANALYSIS] AT SER-155</scope>
    <scope>IDENTIFICATION BY MASS SPECTROMETRY [LARGE SCALE ANALYSIS]</scope>
    <source>
        <tissue>Embryonic kidney</tissue>
    </source>
</reference>
<reference key="7">
    <citation type="journal article" date="2008" name="Proc. Natl. Acad. Sci. U.S.A.">
        <title>A quantitative atlas of mitotic phosphorylation.</title>
        <authorList>
            <person name="Dephoure N."/>
            <person name="Zhou C."/>
            <person name="Villen J."/>
            <person name="Beausoleil S.A."/>
            <person name="Bakalarski C.E."/>
            <person name="Elledge S.J."/>
            <person name="Gygi S.P."/>
        </authorList>
    </citation>
    <scope>PHOSPHORYLATION [LARGE SCALE ANALYSIS] AT SER-155; SER-210 AND SER-216</scope>
    <scope>IDENTIFICATION BY MASS SPECTROMETRY [LARGE SCALE ANALYSIS]</scope>
    <source>
        <tissue>Cervix carcinoma</tissue>
    </source>
</reference>
<reference key="8">
    <citation type="journal article" date="2009" name="Anal. Chem.">
        <title>Lys-N and trypsin cover complementary parts of the phosphoproteome in a refined SCX-based approach.</title>
        <authorList>
            <person name="Gauci S."/>
            <person name="Helbig A.O."/>
            <person name="Slijper M."/>
            <person name="Krijgsveld J."/>
            <person name="Heck A.J."/>
            <person name="Mohammed S."/>
        </authorList>
    </citation>
    <scope>IDENTIFICATION BY MASS SPECTROMETRY [LARGE SCALE ANALYSIS]</scope>
</reference>
<reference key="9">
    <citation type="journal article" date="2009" name="Sci. Signal.">
        <title>Quantitative phosphoproteomic analysis of T cell receptor signaling reveals system-wide modulation of protein-protein interactions.</title>
        <authorList>
            <person name="Mayya V."/>
            <person name="Lundgren D.H."/>
            <person name="Hwang S.-I."/>
            <person name="Rezaul K."/>
            <person name="Wu L."/>
            <person name="Eng J.K."/>
            <person name="Rodionov V."/>
            <person name="Han D.K."/>
        </authorList>
    </citation>
    <scope>PHOSPHORYLATION [LARGE SCALE ANALYSIS] AT SER-155</scope>
    <scope>IDENTIFICATION BY MASS SPECTROMETRY [LARGE SCALE ANALYSIS]</scope>
    <source>
        <tissue>Leukemic T-cell</tissue>
    </source>
</reference>
<reference key="10">
    <citation type="journal article" date="2010" name="Sci. Signal.">
        <title>Quantitative phosphoproteomics reveals widespread full phosphorylation site occupancy during mitosis.</title>
        <authorList>
            <person name="Olsen J.V."/>
            <person name="Vermeulen M."/>
            <person name="Santamaria A."/>
            <person name="Kumar C."/>
            <person name="Miller M.L."/>
            <person name="Jensen L.J."/>
            <person name="Gnad F."/>
            <person name="Cox J."/>
            <person name="Jensen T.S."/>
            <person name="Nigg E.A."/>
            <person name="Brunak S."/>
            <person name="Mann M."/>
        </authorList>
    </citation>
    <scope>PHOSPHORYLATION [LARGE SCALE ANALYSIS] AT SER-155</scope>
    <scope>IDENTIFICATION BY MASS SPECTROMETRY [LARGE SCALE ANALYSIS]</scope>
    <source>
        <tissue>Cervix carcinoma</tissue>
    </source>
</reference>
<reference key="11">
    <citation type="journal article" date="2011" name="Sci. Signal.">
        <title>System-wide temporal characterization of the proteome and phosphoproteome of human embryonic stem cell differentiation.</title>
        <authorList>
            <person name="Rigbolt K.T."/>
            <person name="Prokhorova T.A."/>
            <person name="Akimov V."/>
            <person name="Henningsen J."/>
            <person name="Johansen P.T."/>
            <person name="Kratchmarova I."/>
            <person name="Kassem M."/>
            <person name="Mann M."/>
            <person name="Olsen J.V."/>
            <person name="Blagoev B."/>
        </authorList>
    </citation>
    <scope>PHOSPHORYLATION [LARGE SCALE ANALYSIS] AT SER-155</scope>
    <scope>IDENTIFICATION BY MASS SPECTROMETRY [LARGE SCALE ANALYSIS]</scope>
</reference>
<reference key="12">
    <citation type="submission" date="2007-06" db="PDB data bank">
        <title>Solution structure of RNA binding domain in zinc finger CCHC-type and RNA binding motif 1.</title>
        <authorList>
            <consortium name="RIKEN structural genomics initiative (RSGI)"/>
        </authorList>
    </citation>
    <scope>STRUCTURE BY NMR OF 1-87</scope>
</reference>